<reference key="1">
    <citation type="submission" date="2008-05" db="EMBL/GenBank/DDBJ databases">
        <title>Genome sequence of Clostridium botulinum Ba4 strain 657.</title>
        <authorList>
            <person name="Shrivastava S."/>
            <person name="Brown J.L."/>
            <person name="Bruce D."/>
            <person name="Detter C."/>
            <person name="Munk C."/>
            <person name="Smith L.A."/>
            <person name="Smith T.J."/>
            <person name="Sutton G."/>
            <person name="Brettin T.S."/>
        </authorList>
    </citation>
    <scope>NUCLEOTIDE SEQUENCE [LARGE SCALE GENOMIC DNA]</scope>
    <source>
        <strain>657 / Type Ba4</strain>
    </source>
</reference>
<sequence length="504" mass="55426">MNIKPEEITSIIRQQIENFNTNIETIDSGTIIQIGDGIARVYGLEDCMEGELIEFPNDVYGMALNLEQDNVGCVLLGSEEGIKEGNVVKRTKKVVEVPVGEALVGRVVNSLGMPIDGKGPVLTTETRDVEVPAPGVIDRQSVKEPLQTGIKAIDSMIPIGKGQRELIIGDRQTGKTAIAMDTILNQKGKDVICIYVAIGQKQSTVAHIVNDLTKMGAMDYTIVVSSTASDSAPLQYLAPYAGCSMGEYFMHKGKDVLIVYDDLSKHAVAYRTMSLLLRRPPGREAYPGDVFYLHSRLLERSARLSEKLGGGSLTALPIVETLAGDVTAYIPTNVISITDGQIFLESELFNAGQRPAVNAGISVSRVGGNAQIKAMKQVAGTLRLELAQYRELAAFSQFGSDLDKESVKRLEKGKRLVEILKQPQYSPMPVEKEIIILYAAVSNHLIDIPVNKIKEFEKELFNYIDTHYRDIGKDILEHKQLTDELKSKLDKAINDFKNVFLSEI</sequence>
<evidence type="ECO:0000255" key="1">
    <source>
        <dbReference type="HAMAP-Rule" id="MF_01346"/>
    </source>
</evidence>
<proteinExistence type="inferred from homology"/>
<accession>C3KYJ1</accession>
<feature type="chain" id="PRO_1000214805" description="ATP synthase subunit alpha">
    <location>
        <begin position="1"/>
        <end position="504"/>
    </location>
</feature>
<feature type="binding site" evidence="1">
    <location>
        <begin position="169"/>
        <end position="176"/>
    </location>
    <ligand>
        <name>ATP</name>
        <dbReference type="ChEBI" id="CHEBI:30616"/>
    </ligand>
</feature>
<feature type="site" description="Required for activity" evidence="1">
    <location>
        <position position="362"/>
    </location>
</feature>
<comment type="function">
    <text evidence="1">Produces ATP from ADP in the presence of a proton gradient across the membrane. The alpha chain is a regulatory subunit.</text>
</comment>
<comment type="catalytic activity">
    <reaction evidence="1">
        <text>ATP + H2O + 4 H(+)(in) = ADP + phosphate + 5 H(+)(out)</text>
        <dbReference type="Rhea" id="RHEA:57720"/>
        <dbReference type="ChEBI" id="CHEBI:15377"/>
        <dbReference type="ChEBI" id="CHEBI:15378"/>
        <dbReference type="ChEBI" id="CHEBI:30616"/>
        <dbReference type="ChEBI" id="CHEBI:43474"/>
        <dbReference type="ChEBI" id="CHEBI:456216"/>
        <dbReference type="EC" id="7.1.2.2"/>
    </reaction>
</comment>
<comment type="subunit">
    <text evidence="1">F-type ATPases have 2 components, CF(1) - the catalytic core - and CF(0) - the membrane proton channel. CF(1) has five subunits: alpha(3), beta(3), gamma(1), delta(1), epsilon(1). CF(0) has three main subunits: a(1), b(2) and c(9-12). The alpha and beta chains form an alternating ring which encloses part of the gamma chain. CF(1) is attached to CF(0) by a central stalk formed by the gamma and epsilon chains, while a peripheral stalk is formed by the delta and b chains.</text>
</comment>
<comment type="subcellular location">
    <subcellularLocation>
        <location evidence="1">Cell membrane</location>
        <topology evidence="1">Peripheral membrane protein</topology>
    </subcellularLocation>
</comment>
<comment type="similarity">
    <text evidence="1">Belongs to the ATPase alpha/beta chains family.</text>
</comment>
<organism>
    <name type="scientific">Clostridium botulinum (strain 657 / Type Ba4)</name>
    <dbReference type="NCBI Taxonomy" id="515621"/>
    <lineage>
        <taxon>Bacteria</taxon>
        <taxon>Bacillati</taxon>
        <taxon>Bacillota</taxon>
        <taxon>Clostridia</taxon>
        <taxon>Eubacteriales</taxon>
        <taxon>Clostridiaceae</taxon>
        <taxon>Clostridium</taxon>
    </lineage>
</organism>
<name>ATPA_CLOB6</name>
<gene>
    <name evidence="1" type="primary">atpA</name>
    <name type="ordered locus">CLJ_B0193</name>
</gene>
<keyword id="KW-0066">ATP synthesis</keyword>
<keyword id="KW-0067">ATP-binding</keyword>
<keyword id="KW-1003">Cell membrane</keyword>
<keyword id="KW-0139">CF(1)</keyword>
<keyword id="KW-0375">Hydrogen ion transport</keyword>
<keyword id="KW-0406">Ion transport</keyword>
<keyword id="KW-0472">Membrane</keyword>
<keyword id="KW-0547">Nucleotide-binding</keyword>
<keyword id="KW-1278">Translocase</keyword>
<keyword id="KW-0813">Transport</keyword>
<protein>
    <recommendedName>
        <fullName evidence="1">ATP synthase subunit alpha</fullName>
        <ecNumber evidence="1">7.1.2.2</ecNumber>
    </recommendedName>
    <alternativeName>
        <fullName evidence="1">ATP synthase F1 sector subunit alpha</fullName>
    </alternativeName>
    <alternativeName>
        <fullName evidence="1">F-ATPase subunit alpha</fullName>
    </alternativeName>
</protein>
<dbReference type="EC" id="7.1.2.2" evidence="1"/>
<dbReference type="EMBL" id="CP001083">
    <property type="protein sequence ID" value="ACQ53883.1"/>
    <property type="molecule type" value="Genomic_DNA"/>
</dbReference>
<dbReference type="RefSeq" id="WP_003356056.1">
    <property type="nucleotide sequence ID" value="NC_012658.1"/>
</dbReference>
<dbReference type="SMR" id="C3KYJ1"/>
<dbReference type="GeneID" id="5184409"/>
<dbReference type="KEGG" id="cbi:CLJ_B0193"/>
<dbReference type="HOGENOM" id="CLU_010091_2_1_9"/>
<dbReference type="Proteomes" id="UP000002333">
    <property type="component" value="Chromosome"/>
</dbReference>
<dbReference type="GO" id="GO:0005886">
    <property type="term" value="C:plasma membrane"/>
    <property type="evidence" value="ECO:0007669"/>
    <property type="project" value="UniProtKB-SubCell"/>
</dbReference>
<dbReference type="GO" id="GO:0045259">
    <property type="term" value="C:proton-transporting ATP synthase complex"/>
    <property type="evidence" value="ECO:0007669"/>
    <property type="project" value="UniProtKB-KW"/>
</dbReference>
<dbReference type="GO" id="GO:0043531">
    <property type="term" value="F:ADP binding"/>
    <property type="evidence" value="ECO:0007669"/>
    <property type="project" value="TreeGrafter"/>
</dbReference>
<dbReference type="GO" id="GO:0005524">
    <property type="term" value="F:ATP binding"/>
    <property type="evidence" value="ECO:0007669"/>
    <property type="project" value="UniProtKB-UniRule"/>
</dbReference>
<dbReference type="GO" id="GO:0046933">
    <property type="term" value="F:proton-transporting ATP synthase activity, rotational mechanism"/>
    <property type="evidence" value="ECO:0007669"/>
    <property type="project" value="UniProtKB-UniRule"/>
</dbReference>
<dbReference type="CDD" id="cd18113">
    <property type="entry name" value="ATP-synt_F1_alpha_C"/>
    <property type="match status" value="1"/>
</dbReference>
<dbReference type="CDD" id="cd18116">
    <property type="entry name" value="ATP-synt_F1_alpha_N"/>
    <property type="match status" value="1"/>
</dbReference>
<dbReference type="CDD" id="cd01132">
    <property type="entry name" value="F1-ATPase_alpha_CD"/>
    <property type="match status" value="1"/>
</dbReference>
<dbReference type="FunFam" id="1.20.150.20:FF:000001">
    <property type="entry name" value="ATP synthase subunit alpha"/>
    <property type="match status" value="1"/>
</dbReference>
<dbReference type="FunFam" id="2.40.30.20:FF:000001">
    <property type="entry name" value="ATP synthase subunit alpha"/>
    <property type="match status" value="1"/>
</dbReference>
<dbReference type="FunFam" id="3.40.50.300:FF:000002">
    <property type="entry name" value="ATP synthase subunit alpha"/>
    <property type="match status" value="1"/>
</dbReference>
<dbReference type="Gene3D" id="2.40.30.20">
    <property type="match status" value="1"/>
</dbReference>
<dbReference type="Gene3D" id="1.20.150.20">
    <property type="entry name" value="ATP synthase alpha/beta chain, C-terminal domain"/>
    <property type="match status" value="1"/>
</dbReference>
<dbReference type="Gene3D" id="3.40.50.300">
    <property type="entry name" value="P-loop containing nucleotide triphosphate hydrolases"/>
    <property type="match status" value="1"/>
</dbReference>
<dbReference type="HAMAP" id="MF_01346">
    <property type="entry name" value="ATP_synth_alpha_bact"/>
    <property type="match status" value="1"/>
</dbReference>
<dbReference type="InterPro" id="IPR023366">
    <property type="entry name" value="ATP_synth_asu-like_sf"/>
</dbReference>
<dbReference type="InterPro" id="IPR000793">
    <property type="entry name" value="ATP_synth_asu_C"/>
</dbReference>
<dbReference type="InterPro" id="IPR038376">
    <property type="entry name" value="ATP_synth_asu_C_sf"/>
</dbReference>
<dbReference type="InterPro" id="IPR033732">
    <property type="entry name" value="ATP_synth_F1_a_nt-bd_dom"/>
</dbReference>
<dbReference type="InterPro" id="IPR005294">
    <property type="entry name" value="ATP_synth_F1_asu"/>
</dbReference>
<dbReference type="InterPro" id="IPR020003">
    <property type="entry name" value="ATPase_a/bsu_AS"/>
</dbReference>
<dbReference type="InterPro" id="IPR004100">
    <property type="entry name" value="ATPase_F1/V1/A1_a/bsu_N"/>
</dbReference>
<dbReference type="InterPro" id="IPR036121">
    <property type="entry name" value="ATPase_F1/V1/A1_a/bsu_N_sf"/>
</dbReference>
<dbReference type="InterPro" id="IPR000194">
    <property type="entry name" value="ATPase_F1/V1/A1_a/bsu_nucl-bd"/>
</dbReference>
<dbReference type="InterPro" id="IPR027417">
    <property type="entry name" value="P-loop_NTPase"/>
</dbReference>
<dbReference type="NCBIfam" id="TIGR00962">
    <property type="entry name" value="atpA"/>
    <property type="match status" value="1"/>
</dbReference>
<dbReference type="NCBIfam" id="NF009884">
    <property type="entry name" value="PRK13343.1"/>
    <property type="match status" value="1"/>
</dbReference>
<dbReference type="PANTHER" id="PTHR48082">
    <property type="entry name" value="ATP SYNTHASE SUBUNIT ALPHA, MITOCHONDRIAL"/>
    <property type="match status" value="1"/>
</dbReference>
<dbReference type="PANTHER" id="PTHR48082:SF2">
    <property type="entry name" value="ATP SYNTHASE SUBUNIT ALPHA, MITOCHONDRIAL"/>
    <property type="match status" value="1"/>
</dbReference>
<dbReference type="Pfam" id="PF00006">
    <property type="entry name" value="ATP-synt_ab"/>
    <property type="match status" value="1"/>
</dbReference>
<dbReference type="Pfam" id="PF00306">
    <property type="entry name" value="ATP-synt_ab_C"/>
    <property type="match status" value="1"/>
</dbReference>
<dbReference type="Pfam" id="PF02874">
    <property type="entry name" value="ATP-synt_ab_N"/>
    <property type="match status" value="1"/>
</dbReference>
<dbReference type="PIRSF" id="PIRSF039088">
    <property type="entry name" value="F_ATPase_subunit_alpha"/>
    <property type="match status" value="1"/>
</dbReference>
<dbReference type="SUPFAM" id="SSF47917">
    <property type="entry name" value="C-terminal domain of alpha and beta subunits of F1 ATP synthase"/>
    <property type="match status" value="1"/>
</dbReference>
<dbReference type="SUPFAM" id="SSF50615">
    <property type="entry name" value="N-terminal domain of alpha and beta subunits of F1 ATP synthase"/>
    <property type="match status" value="1"/>
</dbReference>
<dbReference type="SUPFAM" id="SSF52540">
    <property type="entry name" value="P-loop containing nucleoside triphosphate hydrolases"/>
    <property type="match status" value="1"/>
</dbReference>
<dbReference type="PROSITE" id="PS00152">
    <property type="entry name" value="ATPASE_ALPHA_BETA"/>
    <property type="match status" value="1"/>
</dbReference>